<proteinExistence type="inferred from homology"/>
<gene>
    <name evidence="1" type="primary">darP</name>
    <name type="ordered locus">PSEEN1082</name>
</gene>
<keyword id="KW-0963">Cytoplasm</keyword>
<keyword id="KW-0690">Ribosome biogenesis</keyword>
<keyword id="KW-0694">RNA-binding</keyword>
<keyword id="KW-0699">rRNA-binding</keyword>
<comment type="function">
    <text evidence="1">Member of a network of 50S ribosomal subunit biogenesis factors which assembles along the 30S-50S interface, preventing incorrect 23S rRNA structures from forming. Promotes peptidyl transferase center (PTC) maturation.</text>
</comment>
<comment type="subcellular location">
    <subcellularLocation>
        <location evidence="1">Cytoplasm</location>
    </subcellularLocation>
    <text evidence="1">Associates with late stage pre-50S ribosomal subunits.</text>
</comment>
<comment type="similarity">
    <text evidence="1">Belongs to the DarP family.</text>
</comment>
<name>DARP_PSEE4</name>
<accession>Q1IEC3</accession>
<evidence type="ECO:0000255" key="1">
    <source>
        <dbReference type="HAMAP-Rule" id="MF_00765"/>
    </source>
</evidence>
<protein>
    <recommendedName>
        <fullName evidence="1">Dual-action ribosomal maturation protein DarP</fullName>
    </recommendedName>
    <alternativeName>
        <fullName evidence="1">Large ribosomal subunit assembly factor DarP</fullName>
    </alternativeName>
</protein>
<organism>
    <name type="scientific">Pseudomonas entomophila (strain L48)</name>
    <dbReference type="NCBI Taxonomy" id="384676"/>
    <lineage>
        <taxon>Bacteria</taxon>
        <taxon>Pseudomonadati</taxon>
        <taxon>Pseudomonadota</taxon>
        <taxon>Gammaproteobacteria</taxon>
        <taxon>Pseudomonadales</taxon>
        <taxon>Pseudomonadaceae</taxon>
        <taxon>Pseudomonas</taxon>
    </lineage>
</organism>
<dbReference type="EMBL" id="CT573326">
    <property type="protein sequence ID" value="CAK13982.1"/>
    <property type="molecule type" value="Genomic_DNA"/>
</dbReference>
<dbReference type="SMR" id="Q1IEC3"/>
<dbReference type="STRING" id="384676.PSEEN1082"/>
<dbReference type="GeneID" id="32804373"/>
<dbReference type="KEGG" id="pen:PSEEN1082"/>
<dbReference type="eggNOG" id="COG3028">
    <property type="taxonomic scope" value="Bacteria"/>
</dbReference>
<dbReference type="HOGENOM" id="CLU_106757_4_0_6"/>
<dbReference type="OrthoDB" id="5293604at2"/>
<dbReference type="Proteomes" id="UP000000658">
    <property type="component" value="Chromosome"/>
</dbReference>
<dbReference type="GO" id="GO:0005829">
    <property type="term" value="C:cytosol"/>
    <property type="evidence" value="ECO:0007669"/>
    <property type="project" value="TreeGrafter"/>
</dbReference>
<dbReference type="GO" id="GO:0043022">
    <property type="term" value="F:ribosome binding"/>
    <property type="evidence" value="ECO:0007669"/>
    <property type="project" value="UniProtKB-UniRule"/>
</dbReference>
<dbReference type="GO" id="GO:0019843">
    <property type="term" value="F:rRNA binding"/>
    <property type="evidence" value="ECO:0007669"/>
    <property type="project" value="UniProtKB-UniRule"/>
</dbReference>
<dbReference type="GO" id="GO:1902626">
    <property type="term" value="P:assembly of large subunit precursor of preribosome"/>
    <property type="evidence" value="ECO:0007669"/>
    <property type="project" value="UniProtKB-UniRule"/>
</dbReference>
<dbReference type="CDD" id="cd16331">
    <property type="entry name" value="YjgA-like"/>
    <property type="match status" value="1"/>
</dbReference>
<dbReference type="FunFam" id="1.10.60.30:FF:000002">
    <property type="entry name" value="UPF0307 protein YjgA"/>
    <property type="match status" value="1"/>
</dbReference>
<dbReference type="Gene3D" id="1.10.60.30">
    <property type="entry name" value="PSPTO4464-like domains"/>
    <property type="match status" value="2"/>
</dbReference>
<dbReference type="HAMAP" id="MF_00765">
    <property type="entry name" value="DarP"/>
    <property type="match status" value="1"/>
</dbReference>
<dbReference type="InterPro" id="IPR006839">
    <property type="entry name" value="DarP"/>
</dbReference>
<dbReference type="InterPro" id="IPR023153">
    <property type="entry name" value="DarP_sf"/>
</dbReference>
<dbReference type="NCBIfam" id="NF003593">
    <property type="entry name" value="PRK05255.1-1"/>
    <property type="match status" value="1"/>
</dbReference>
<dbReference type="PANTHER" id="PTHR38101">
    <property type="entry name" value="UPF0307 PROTEIN YJGA"/>
    <property type="match status" value="1"/>
</dbReference>
<dbReference type="PANTHER" id="PTHR38101:SF1">
    <property type="entry name" value="UPF0307 PROTEIN YJGA"/>
    <property type="match status" value="1"/>
</dbReference>
<dbReference type="Pfam" id="PF04751">
    <property type="entry name" value="DarP"/>
    <property type="match status" value="1"/>
</dbReference>
<dbReference type="PIRSF" id="PIRSF016183">
    <property type="entry name" value="UCP016183"/>
    <property type="match status" value="1"/>
</dbReference>
<dbReference type="SUPFAM" id="SSF158710">
    <property type="entry name" value="PSPTO4464-like"/>
    <property type="match status" value="1"/>
</dbReference>
<feature type="chain" id="PRO_1000046802" description="Dual-action ribosomal maturation protein DarP">
    <location>
        <begin position="1"/>
        <end position="173"/>
    </location>
</feature>
<sequence length="173" mass="20279">MVDSYDDAFDGEKSKTQIKRELHALVELGERLTTLKADTLARLPLTDELRKALDEASRHTAHGARKRHMSFVGKLMRVQDLDAIHAVLEQIDSSSRQYNERFHGLERWRDRLIDGNDEDLERFVNEFPDTDRQHLRSLIRHAQHEKARNKPPAAARKVFKYIRDLDETQRGLR</sequence>
<reference key="1">
    <citation type="journal article" date="2006" name="Nat. Biotechnol.">
        <title>Complete genome sequence of the entomopathogenic and metabolically versatile soil bacterium Pseudomonas entomophila.</title>
        <authorList>
            <person name="Vodovar N."/>
            <person name="Vallenet D."/>
            <person name="Cruveiller S."/>
            <person name="Rouy Z."/>
            <person name="Barbe V."/>
            <person name="Acosta C."/>
            <person name="Cattolico L."/>
            <person name="Jubin C."/>
            <person name="Lajus A."/>
            <person name="Segurens B."/>
            <person name="Vacherie B."/>
            <person name="Wincker P."/>
            <person name="Weissenbach J."/>
            <person name="Lemaitre B."/>
            <person name="Medigue C."/>
            <person name="Boccard F."/>
        </authorList>
    </citation>
    <scope>NUCLEOTIDE SEQUENCE [LARGE SCALE GENOMIC DNA]</scope>
    <source>
        <strain>L48</strain>
    </source>
</reference>